<evidence type="ECO:0000256" key="1">
    <source>
        <dbReference type="SAM" id="MobiDB-lite"/>
    </source>
</evidence>
<evidence type="ECO:0000269" key="2">
    <source>
    </source>
</evidence>
<evidence type="ECO:0000269" key="3">
    <source>
    </source>
</evidence>
<evidence type="ECO:0000303" key="4">
    <source>
    </source>
</evidence>
<evidence type="ECO:0000303" key="5">
    <source>
    </source>
</evidence>
<evidence type="ECO:0000305" key="6"/>
<organism>
    <name type="scientific">Arabidopsis thaliana</name>
    <name type="common">Mouse-ear cress</name>
    <dbReference type="NCBI Taxonomy" id="3702"/>
    <lineage>
        <taxon>Eukaryota</taxon>
        <taxon>Viridiplantae</taxon>
        <taxon>Streptophyta</taxon>
        <taxon>Embryophyta</taxon>
        <taxon>Tracheophyta</taxon>
        <taxon>Spermatophyta</taxon>
        <taxon>Magnoliopsida</taxon>
        <taxon>eudicotyledons</taxon>
        <taxon>Gunneridae</taxon>
        <taxon>Pentapetalae</taxon>
        <taxon>rosids</taxon>
        <taxon>malvids</taxon>
        <taxon>Brassicales</taxon>
        <taxon>Brassicaceae</taxon>
        <taxon>Camelineae</taxon>
        <taxon>Arabidopsis</taxon>
    </lineage>
</organism>
<name>BPC7_ARATH</name>
<gene>
    <name type="primary">BPC7</name>
    <name type="synonym">BBR/BPC7</name>
    <name type="ordered locus">At2g35550</name>
    <name type="ORF">T32F12.7</name>
</gene>
<dbReference type="EMBL" id="EU089960">
    <property type="protein sequence ID" value="ABU50825.1"/>
    <property type="molecule type" value="Genomic_DNA"/>
</dbReference>
<dbReference type="EMBL" id="AY380573">
    <property type="protein sequence ID" value="AAR25826.1"/>
    <property type="molecule type" value="mRNA"/>
</dbReference>
<dbReference type="EMBL" id="AC005314">
    <property type="protein sequence ID" value="AAC36166.1"/>
    <property type="molecule type" value="Genomic_DNA"/>
</dbReference>
<dbReference type="EMBL" id="CP002685">
    <property type="protein sequence ID" value="AEC09120.1"/>
    <property type="molecule type" value="Genomic_DNA"/>
</dbReference>
<dbReference type="EMBL" id="CP002685">
    <property type="protein sequence ID" value="AEC09121.1"/>
    <property type="molecule type" value="Genomic_DNA"/>
</dbReference>
<dbReference type="EMBL" id="CP002685">
    <property type="protein sequence ID" value="AEC09122.1"/>
    <property type="molecule type" value="Genomic_DNA"/>
</dbReference>
<dbReference type="EMBL" id="CP002685">
    <property type="protein sequence ID" value="AEC09123.1"/>
    <property type="molecule type" value="Genomic_DNA"/>
</dbReference>
<dbReference type="EMBL" id="AY102550">
    <property type="protein sequence ID" value="AAM76755.1"/>
    <property type="molecule type" value="mRNA"/>
</dbReference>
<dbReference type="EMBL" id="AY116857">
    <property type="protein sequence ID" value="AAM96822.1"/>
    <property type="molecule type" value="mRNA"/>
</dbReference>
<dbReference type="EMBL" id="BT026350">
    <property type="protein sequence ID" value="ABH04457.1"/>
    <property type="molecule type" value="mRNA"/>
</dbReference>
<dbReference type="PIR" id="A84770">
    <property type="entry name" value="A84770"/>
</dbReference>
<dbReference type="RefSeq" id="NP_001031488.1">
    <molecule id="O82286-1"/>
    <property type="nucleotide sequence ID" value="NM_001036411.2"/>
</dbReference>
<dbReference type="RefSeq" id="NP_001078009.1">
    <molecule id="O82286-1"/>
    <property type="nucleotide sequence ID" value="NM_001084540.2"/>
</dbReference>
<dbReference type="RefSeq" id="NP_181098.2">
    <molecule id="O82286-2"/>
    <property type="nucleotide sequence ID" value="NM_129107.3"/>
</dbReference>
<dbReference type="RefSeq" id="NP_850249.1">
    <molecule id="O82286-1"/>
    <property type="nucleotide sequence ID" value="NM_179918.2"/>
</dbReference>
<dbReference type="SMR" id="O82286"/>
<dbReference type="BioGRID" id="3466">
    <property type="interactions" value="6"/>
</dbReference>
<dbReference type="FunCoup" id="O82286">
    <property type="interactions" value="2"/>
</dbReference>
<dbReference type="IntAct" id="O82286">
    <property type="interactions" value="6"/>
</dbReference>
<dbReference type="STRING" id="3702.O82286"/>
<dbReference type="PaxDb" id="3702-AT2G35550.1"/>
<dbReference type="ProteomicsDB" id="240734">
    <molecule id="O82286-1"/>
</dbReference>
<dbReference type="EnsemblPlants" id="AT2G35550.1">
    <molecule id="O82286-2"/>
    <property type="protein sequence ID" value="AT2G35550.1"/>
    <property type="gene ID" value="AT2G35550"/>
</dbReference>
<dbReference type="EnsemblPlants" id="AT2G35550.2">
    <molecule id="O82286-1"/>
    <property type="protein sequence ID" value="AT2G35550.2"/>
    <property type="gene ID" value="AT2G35550"/>
</dbReference>
<dbReference type="EnsemblPlants" id="AT2G35550.3">
    <molecule id="O82286-1"/>
    <property type="protein sequence ID" value="AT2G35550.3"/>
    <property type="gene ID" value="AT2G35550"/>
</dbReference>
<dbReference type="EnsemblPlants" id="AT2G35550.4">
    <molecule id="O82286-1"/>
    <property type="protein sequence ID" value="AT2G35550.4"/>
    <property type="gene ID" value="AT2G35550"/>
</dbReference>
<dbReference type="GeneID" id="818120"/>
<dbReference type="Gramene" id="AT2G35550.1">
    <molecule id="O82286-2"/>
    <property type="protein sequence ID" value="AT2G35550.1"/>
    <property type="gene ID" value="AT2G35550"/>
</dbReference>
<dbReference type="Gramene" id="AT2G35550.2">
    <molecule id="O82286-1"/>
    <property type="protein sequence ID" value="AT2G35550.2"/>
    <property type="gene ID" value="AT2G35550"/>
</dbReference>
<dbReference type="Gramene" id="AT2G35550.3">
    <molecule id="O82286-1"/>
    <property type="protein sequence ID" value="AT2G35550.3"/>
    <property type="gene ID" value="AT2G35550"/>
</dbReference>
<dbReference type="Gramene" id="AT2G35550.4">
    <molecule id="O82286-1"/>
    <property type="protein sequence ID" value="AT2G35550.4"/>
    <property type="gene ID" value="AT2G35550"/>
</dbReference>
<dbReference type="KEGG" id="ath:AT2G35550"/>
<dbReference type="Araport" id="AT2G35550"/>
<dbReference type="TAIR" id="AT2G35550">
    <property type="gene designation" value="BPC7"/>
</dbReference>
<dbReference type="eggNOG" id="ENOG502RYY8">
    <property type="taxonomic scope" value="Eukaryota"/>
</dbReference>
<dbReference type="HOGENOM" id="CLU_039119_3_0_1"/>
<dbReference type="InParanoid" id="O82286"/>
<dbReference type="OMA" id="HMKPATS"/>
<dbReference type="PRO" id="PR:O82286"/>
<dbReference type="Proteomes" id="UP000006548">
    <property type="component" value="Chromosome 2"/>
</dbReference>
<dbReference type="ExpressionAtlas" id="O82286">
    <property type="expression patterns" value="baseline and differential"/>
</dbReference>
<dbReference type="GO" id="GO:0005634">
    <property type="term" value="C:nucleus"/>
    <property type="evidence" value="ECO:0000314"/>
    <property type="project" value="TAIR"/>
</dbReference>
<dbReference type="GO" id="GO:0003677">
    <property type="term" value="F:DNA binding"/>
    <property type="evidence" value="ECO:0000314"/>
    <property type="project" value="TAIR"/>
</dbReference>
<dbReference type="InterPro" id="IPR010409">
    <property type="entry name" value="GAGA-bd_tscrpt_act"/>
</dbReference>
<dbReference type="PANTHER" id="PTHR31421">
    <property type="entry name" value="PROTEIN BASIC PENTACYSTEINE3"/>
    <property type="match status" value="1"/>
</dbReference>
<dbReference type="PANTHER" id="PTHR31421:SF6">
    <property type="entry name" value="PROTEIN BASIC PENTACYSTEINE7"/>
    <property type="match status" value="1"/>
</dbReference>
<dbReference type="Pfam" id="PF06217">
    <property type="entry name" value="GAGA_bind"/>
    <property type="match status" value="1"/>
</dbReference>
<dbReference type="SMART" id="SM01226">
    <property type="entry name" value="GAGA_bind"/>
    <property type="match status" value="1"/>
</dbReference>
<accession>O82286</accession>
<accession>Q8L875</accession>
<proteinExistence type="evidence at protein level"/>
<sequence length="226" mass="24813">MNSFPAQNLMLSATNANKDSGLRTSNAHWLHSCIAVPKTTGIDLSQEPPAEGVMVPQSHLFPPPIRDSRNDTETVKQKSVNQSPSKALKPKPQRKKRSVSNKSKKTPSIPETKREKKNLDINIDISSFDTSGVPPPVCSCTGVSRVCYKWGMGGWQSSCCTISISTYPLPMSTTRPGARLAGRKMSNGAYVKLLARLADEGYDLSHPLDLKNHWARHGTNKFVTIK</sequence>
<reference key="1">
    <citation type="journal article" date="2003" name="Plant J.">
        <title>The GA octodinucleotide repeat binding factor BBR participates in the transcriptional regulation of the homeobox gene Bkn3.</title>
        <authorList>
            <person name="Santi L."/>
            <person name="Wang Y."/>
            <person name="Stile M.R."/>
            <person name="Berendzen K.W."/>
            <person name="Wanke D."/>
            <person name="Roig C."/>
            <person name="Pozzi C."/>
            <person name="Mueller K."/>
            <person name="Mueller J."/>
            <person name="Rohde W."/>
            <person name="Salamini F."/>
        </authorList>
    </citation>
    <scope>NUCLEOTIDE SEQUENCE [GENOMIC DNA] (ISOFORM 1)</scope>
    <source>
        <strain>cv. Cvi-0</strain>
    </source>
</reference>
<reference key="2">
    <citation type="journal article" date="2004" name="Plant J.">
        <title>Definition and interactions of a positive regulatory element of the Arabidopsis INNER NO OUTER promoter.</title>
        <authorList>
            <person name="Meister R.J."/>
            <person name="Williams L.A."/>
            <person name="Monfared M.M."/>
            <person name="Gallagher T.L."/>
            <person name="Kraft E.A."/>
            <person name="Nelson C.G."/>
            <person name="Gasser C.S."/>
        </authorList>
    </citation>
    <scope>NUCLEOTIDE SEQUENCE [MRNA] (ISOFORM 1)</scope>
    <scope>FUNCTION</scope>
    <scope>DNA-BINDING</scope>
    <scope>TISSUE SPECIFICITY</scope>
    <scope>SUBCELLULAR LOCATION</scope>
    <source>
        <strain>cv. Landsberg erecta</strain>
    </source>
</reference>
<reference key="3">
    <citation type="journal article" date="1999" name="Nature">
        <title>Sequence and analysis of chromosome 2 of the plant Arabidopsis thaliana.</title>
        <authorList>
            <person name="Lin X."/>
            <person name="Kaul S."/>
            <person name="Rounsley S.D."/>
            <person name="Shea T.P."/>
            <person name="Benito M.-I."/>
            <person name="Town C.D."/>
            <person name="Fujii C.Y."/>
            <person name="Mason T.M."/>
            <person name="Bowman C.L."/>
            <person name="Barnstead M.E."/>
            <person name="Feldblyum T.V."/>
            <person name="Buell C.R."/>
            <person name="Ketchum K.A."/>
            <person name="Lee J.J."/>
            <person name="Ronning C.M."/>
            <person name="Koo H.L."/>
            <person name="Moffat K.S."/>
            <person name="Cronin L.A."/>
            <person name="Shen M."/>
            <person name="Pai G."/>
            <person name="Van Aken S."/>
            <person name="Umayam L."/>
            <person name="Tallon L.J."/>
            <person name="Gill J.E."/>
            <person name="Adams M.D."/>
            <person name="Carrera A.J."/>
            <person name="Creasy T.H."/>
            <person name="Goodman H.M."/>
            <person name="Somerville C.R."/>
            <person name="Copenhaver G.P."/>
            <person name="Preuss D."/>
            <person name="Nierman W.C."/>
            <person name="White O."/>
            <person name="Eisen J.A."/>
            <person name="Salzberg S.L."/>
            <person name="Fraser C.M."/>
            <person name="Venter J.C."/>
        </authorList>
    </citation>
    <scope>NUCLEOTIDE SEQUENCE [LARGE SCALE GENOMIC DNA]</scope>
    <source>
        <strain>cv. Columbia</strain>
    </source>
</reference>
<reference key="4">
    <citation type="journal article" date="2017" name="Plant J.">
        <title>Araport11: a complete reannotation of the Arabidopsis thaliana reference genome.</title>
        <authorList>
            <person name="Cheng C.Y."/>
            <person name="Krishnakumar V."/>
            <person name="Chan A.P."/>
            <person name="Thibaud-Nissen F."/>
            <person name="Schobel S."/>
            <person name="Town C.D."/>
        </authorList>
    </citation>
    <scope>GENOME REANNOTATION</scope>
    <source>
        <strain>cv. Columbia</strain>
    </source>
</reference>
<reference key="5">
    <citation type="journal article" date="2002" name="Plant Physiol.">
        <title>Cloning and sequencing of cDNAs for hypothetical genes from chromosome 2 of Arabidopsis.</title>
        <authorList>
            <person name="Xiao Y.-L."/>
            <person name="Malik M."/>
            <person name="Whitelaw C.A."/>
            <person name="Town C.D."/>
        </authorList>
    </citation>
    <scope>NUCLEOTIDE SEQUENCE [LARGE SCALE MRNA] (ISOFORMS 1 AND 2)</scope>
    <source>
        <strain>cv. Columbia</strain>
    </source>
</reference>
<reference key="6">
    <citation type="journal article" date="2005" name="Plant Physiol.">
        <title>Analysis of the cDNAs of hypothetical genes on Arabidopsis chromosome 2 reveals numerous transcript variants.</title>
        <authorList>
            <person name="Xiao Y.-L."/>
            <person name="Smith S.R."/>
            <person name="Ishmael N."/>
            <person name="Redman J.C."/>
            <person name="Kumar N."/>
            <person name="Monaghan E.L."/>
            <person name="Ayele M."/>
            <person name="Haas B.J."/>
            <person name="Wu H.C."/>
            <person name="Town C.D."/>
        </authorList>
    </citation>
    <scope>NUCLEOTIDE SEQUENCE [LARGE SCALE MRNA] (ISOFORMS 1 AND 2)</scope>
    <source>
        <strain>cv. Columbia</strain>
    </source>
</reference>
<reference key="7">
    <citation type="submission" date="2006-08" db="EMBL/GenBank/DDBJ databases">
        <title>Arabidopsis ORF clones.</title>
        <authorList>
            <person name="Bautista V.R."/>
            <person name="Kim C.J."/>
            <person name="Chen H."/>
            <person name="Quinitio C."/>
            <person name="Ecker J.R."/>
        </authorList>
    </citation>
    <scope>NUCLEOTIDE SEQUENCE [LARGE SCALE MRNA] (ISOFORM 1)</scope>
    <source>
        <strain>cv. Columbia</strain>
    </source>
</reference>
<reference key="8">
    <citation type="book" date="2009" name="Proceedings of the 20th international conference on Arabidopsis research">
        <title>The plant specific BPC/BBR family of GAGA-repeat binding proteins.</title>
        <authorList>
            <person name="Bloss U."/>
            <person name="Hohenstatt M.L."/>
            <person name="Hummel S."/>
            <person name="Harter K."/>
            <person name="Wanke D."/>
        </authorList>
    </citation>
    <scope>GENE FAMILY</scope>
</reference>
<reference key="9">
    <citation type="journal article" date="2011" name="Plant J.">
        <title>Overlapping and antagonistic activities of BASIC PENTACYSTEINE genes affect a range of developmental processes in Arabidopsis.</title>
        <authorList>
            <person name="Monfared M.M."/>
            <person name="Simon M.K."/>
            <person name="Meister R.J."/>
            <person name="Roig-Villanova I."/>
            <person name="Kooiker M."/>
            <person name="Colombo L."/>
            <person name="Fletcher J.C."/>
            <person name="Gasser C.S."/>
        </authorList>
    </citation>
    <scope>TISSUE SPECIFICITY</scope>
</reference>
<comment type="function">
    <text evidence="2">Transcriptional regulator that specifically binds to GA-rich elements (GAGA-repeats) present in regulatory sequences of genes involved in developmental processes.</text>
</comment>
<comment type="subcellular location">
    <subcellularLocation>
        <location evidence="2">Nucleus</location>
    </subcellularLocation>
</comment>
<comment type="alternative products">
    <event type="alternative splicing"/>
    <isoform>
        <id>O82286-1</id>
        <name>1</name>
        <sequence type="displayed"/>
    </isoform>
    <isoform>
        <id>O82286-2</id>
        <name>2</name>
        <sequence type="described" ref="VSP_041901"/>
    </isoform>
</comment>
<comment type="tissue specificity">
    <text evidence="2 3">Expressed in seedlings, leaves and pistils. Detected in anthers, in pollen grains, in young rosette, in leaf vasculature, in the lateral and primary roots, in embryo sac, and in the whole ovule.</text>
</comment>
<comment type="similarity">
    <text evidence="6">Belongs to the BBR/BPC family.</text>
</comment>
<keyword id="KW-0025">Alternative splicing</keyword>
<keyword id="KW-0238">DNA-binding</keyword>
<keyword id="KW-0539">Nucleus</keyword>
<keyword id="KW-1185">Reference proteome</keyword>
<keyword id="KW-0804">Transcription</keyword>
<keyword id="KW-0805">Transcription regulation</keyword>
<protein>
    <recommendedName>
        <fullName>Protein BASIC PENTACYSTEINE7</fullName>
        <shortName>AtBPC7</shortName>
    </recommendedName>
    <alternativeName>
        <fullName>GAGA-binding transcriptional activator BBR/BPC7</fullName>
    </alternativeName>
</protein>
<feature type="chain" id="PRO_0000413441" description="Protein BASIC PENTACYSTEINE7">
    <location>
        <begin position="1"/>
        <end position="226"/>
    </location>
</feature>
<feature type="region of interest" description="Disordered" evidence="1">
    <location>
        <begin position="42"/>
        <end position="116"/>
    </location>
</feature>
<feature type="compositionally biased region" description="Basic and acidic residues" evidence="1">
    <location>
        <begin position="66"/>
        <end position="76"/>
    </location>
</feature>
<feature type="compositionally biased region" description="Basic residues" evidence="1">
    <location>
        <begin position="88"/>
        <end position="105"/>
    </location>
</feature>
<feature type="splice variant" id="VSP_041901" description="In isoform 2." evidence="4 5">
    <original>M</original>
    <variation>MGLDSSFVNSSGFADFQSNNLERSNLFLYELQREGVIFPLKLAIKM</variation>
    <location>
        <position position="1"/>
    </location>
</feature>